<sequence length="142" mass="15978">MKTFVAKPETVKRDWYVVDATGKTLGRLATELARRLRGKHKAEYTPHVDTGDYIIVINADKVAVTGRKETDKLYYWHTGYVGGIKQATFKEMIARRPEAVIEIAVKGMLPKGPLGRAMFRKLKVYAGGEHQHAAQQPQVLDI</sequence>
<feature type="chain" id="PRO_0000133737" description="Large ribosomal subunit protein uL13">
    <location>
        <begin position="1"/>
        <end position="142"/>
    </location>
</feature>
<reference key="1">
    <citation type="journal article" date="1995" name="Science">
        <title>Whole-genome random sequencing and assembly of Haemophilus influenzae Rd.</title>
        <authorList>
            <person name="Fleischmann R.D."/>
            <person name="Adams M.D."/>
            <person name="White O."/>
            <person name="Clayton R.A."/>
            <person name="Kirkness E.F."/>
            <person name="Kerlavage A.R."/>
            <person name="Bult C.J."/>
            <person name="Tomb J.-F."/>
            <person name="Dougherty B.A."/>
            <person name="Merrick J.M."/>
            <person name="McKenney K."/>
            <person name="Sutton G.G."/>
            <person name="FitzHugh W."/>
            <person name="Fields C.A."/>
            <person name="Gocayne J.D."/>
            <person name="Scott J.D."/>
            <person name="Shirley R."/>
            <person name="Liu L.-I."/>
            <person name="Glodek A."/>
            <person name="Kelley J.M."/>
            <person name="Weidman J.F."/>
            <person name="Phillips C.A."/>
            <person name="Spriggs T."/>
            <person name="Hedblom E."/>
            <person name="Cotton M.D."/>
            <person name="Utterback T.R."/>
            <person name="Hanna M.C."/>
            <person name="Nguyen D.T."/>
            <person name="Saudek D.M."/>
            <person name="Brandon R.C."/>
            <person name="Fine L.D."/>
            <person name="Fritchman J.L."/>
            <person name="Fuhrmann J.L."/>
            <person name="Geoghagen N.S.M."/>
            <person name="Gnehm C.L."/>
            <person name="McDonald L.A."/>
            <person name="Small K.V."/>
            <person name="Fraser C.M."/>
            <person name="Smith H.O."/>
            <person name="Venter J.C."/>
        </authorList>
    </citation>
    <scope>NUCLEOTIDE SEQUENCE [LARGE SCALE GENOMIC DNA]</scope>
    <source>
        <strain>ATCC 51907 / DSM 11121 / KW20 / Rd</strain>
    </source>
</reference>
<keyword id="KW-1185">Reference proteome</keyword>
<keyword id="KW-0687">Ribonucleoprotein</keyword>
<keyword id="KW-0689">Ribosomal protein</keyword>
<protein>
    <recommendedName>
        <fullName evidence="1">Large ribosomal subunit protein uL13</fullName>
    </recommendedName>
    <alternativeName>
        <fullName evidence="2">50S ribosomal protein L13</fullName>
    </alternativeName>
</protein>
<name>RL13_HAEIN</name>
<gene>
    <name evidence="1" type="primary">rplM</name>
    <name evidence="1" type="synonym">rpl13</name>
    <name type="ordered locus">HI_1443</name>
</gene>
<proteinExistence type="inferred from homology"/>
<organism>
    <name type="scientific">Haemophilus influenzae (strain ATCC 51907 / DSM 11121 / KW20 / Rd)</name>
    <dbReference type="NCBI Taxonomy" id="71421"/>
    <lineage>
        <taxon>Bacteria</taxon>
        <taxon>Pseudomonadati</taxon>
        <taxon>Pseudomonadota</taxon>
        <taxon>Gammaproteobacteria</taxon>
        <taxon>Pasteurellales</taxon>
        <taxon>Pasteurellaceae</taxon>
        <taxon>Haemophilus</taxon>
    </lineage>
</organism>
<comment type="function">
    <text evidence="1">This protein is one of the early assembly proteins of the 50S ribosomal subunit, although it is not seen to bind rRNA by itself. It is important during the early stages of 50S assembly.</text>
</comment>
<comment type="subunit">
    <text evidence="1">Part of the 50S ribosomal subunit.</text>
</comment>
<comment type="similarity">
    <text evidence="1">Belongs to the universal ribosomal protein uL13 family.</text>
</comment>
<dbReference type="EMBL" id="L42023">
    <property type="protein sequence ID" value="AAC23093.1"/>
    <property type="molecule type" value="Genomic_DNA"/>
</dbReference>
<dbReference type="PIR" id="G64123">
    <property type="entry name" value="G64123"/>
</dbReference>
<dbReference type="RefSeq" id="NP_439595.1">
    <property type="nucleotide sequence ID" value="NC_000907.1"/>
</dbReference>
<dbReference type="SMR" id="P44387"/>
<dbReference type="STRING" id="71421.HI_1443"/>
<dbReference type="EnsemblBacteria" id="AAC23093">
    <property type="protein sequence ID" value="AAC23093"/>
    <property type="gene ID" value="HI_1443"/>
</dbReference>
<dbReference type="KEGG" id="hin:HI_1443"/>
<dbReference type="PATRIC" id="fig|71421.8.peg.1505"/>
<dbReference type="eggNOG" id="COG0102">
    <property type="taxonomic scope" value="Bacteria"/>
</dbReference>
<dbReference type="HOGENOM" id="CLU_082184_2_2_6"/>
<dbReference type="OrthoDB" id="9801330at2"/>
<dbReference type="PhylomeDB" id="P44387"/>
<dbReference type="BioCyc" id="HINF71421:G1GJ1-1469-MONOMER"/>
<dbReference type="Proteomes" id="UP000000579">
    <property type="component" value="Chromosome"/>
</dbReference>
<dbReference type="GO" id="GO:0022625">
    <property type="term" value="C:cytosolic large ribosomal subunit"/>
    <property type="evidence" value="ECO:0000318"/>
    <property type="project" value="GO_Central"/>
</dbReference>
<dbReference type="GO" id="GO:0005840">
    <property type="term" value="C:ribosome"/>
    <property type="evidence" value="ECO:0000318"/>
    <property type="project" value="GO_Central"/>
</dbReference>
<dbReference type="GO" id="GO:0003729">
    <property type="term" value="F:mRNA binding"/>
    <property type="evidence" value="ECO:0000318"/>
    <property type="project" value="GO_Central"/>
</dbReference>
<dbReference type="GO" id="GO:0003735">
    <property type="term" value="F:structural constituent of ribosome"/>
    <property type="evidence" value="ECO:0000318"/>
    <property type="project" value="GO_Central"/>
</dbReference>
<dbReference type="GO" id="GO:0017148">
    <property type="term" value="P:negative regulation of translation"/>
    <property type="evidence" value="ECO:0000318"/>
    <property type="project" value="GO_Central"/>
</dbReference>
<dbReference type="GO" id="GO:0006412">
    <property type="term" value="P:translation"/>
    <property type="evidence" value="ECO:0007669"/>
    <property type="project" value="UniProtKB-UniRule"/>
</dbReference>
<dbReference type="CDD" id="cd00392">
    <property type="entry name" value="Ribosomal_L13"/>
    <property type="match status" value="1"/>
</dbReference>
<dbReference type="FunFam" id="3.90.1180.10:FF:000001">
    <property type="entry name" value="50S ribosomal protein L13"/>
    <property type="match status" value="1"/>
</dbReference>
<dbReference type="Gene3D" id="3.90.1180.10">
    <property type="entry name" value="Ribosomal protein L13"/>
    <property type="match status" value="1"/>
</dbReference>
<dbReference type="HAMAP" id="MF_01366">
    <property type="entry name" value="Ribosomal_uL13"/>
    <property type="match status" value="1"/>
</dbReference>
<dbReference type="InterPro" id="IPR005822">
    <property type="entry name" value="Ribosomal_uL13"/>
</dbReference>
<dbReference type="InterPro" id="IPR005823">
    <property type="entry name" value="Ribosomal_uL13_bac-type"/>
</dbReference>
<dbReference type="InterPro" id="IPR023563">
    <property type="entry name" value="Ribosomal_uL13_CS"/>
</dbReference>
<dbReference type="InterPro" id="IPR036899">
    <property type="entry name" value="Ribosomal_uL13_sf"/>
</dbReference>
<dbReference type="NCBIfam" id="TIGR01066">
    <property type="entry name" value="rplM_bact"/>
    <property type="match status" value="1"/>
</dbReference>
<dbReference type="PANTHER" id="PTHR11545:SF2">
    <property type="entry name" value="LARGE RIBOSOMAL SUBUNIT PROTEIN UL13M"/>
    <property type="match status" value="1"/>
</dbReference>
<dbReference type="PANTHER" id="PTHR11545">
    <property type="entry name" value="RIBOSOMAL PROTEIN L13"/>
    <property type="match status" value="1"/>
</dbReference>
<dbReference type="Pfam" id="PF00572">
    <property type="entry name" value="Ribosomal_L13"/>
    <property type="match status" value="1"/>
</dbReference>
<dbReference type="PIRSF" id="PIRSF002181">
    <property type="entry name" value="Ribosomal_L13"/>
    <property type="match status" value="1"/>
</dbReference>
<dbReference type="SUPFAM" id="SSF52161">
    <property type="entry name" value="Ribosomal protein L13"/>
    <property type="match status" value="1"/>
</dbReference>
<dbReference type="PROSITE" id="PS00783">
    <property type="entry name" value="RIBOSOMAL_L13"/>
    <property type="match status" value="1"/>
</dbReference>
<evidence type="ECO:0000255" key="1">
    <source>
        <dbReference type="HAMAP-Rule" id="MF_01366"/>
    </source>
</evidence>
<evidence type="ECO:0000305" key="2"/>
<accession>P44387</accession>